<evidence type="ECO:0000255" key="1">
    <source>
        <dbReference type="HAMAP-Rule" id="MF_00274"/>
    </source>
</evidence>
<keyword id="KW-0963">Cytoplasm</keyword>
<keyword id="KW-0238">DNA-binding</keyword>
<proteinExistence type="inferred from homology"/>
<feature type="chain" id="PRO_1000003777" description="Nucleoid-associated protein Mkms_4993">
    <location>
        <begin position="1"/>
        <end position="110"/>
    </location>
</feature>
<sequence>MQPGGQPDMSALLAQAQQMQQQLMEAQESLANSEVHGQAGGGLVQVTMKGSGEVTSVAIDPKVVDPDDVETLQDLVVGAIADAAKQVTILAHDRLGPLAGGMGGLGIPGL</sequence>
<name>Y4993_MYCSK</name>
<organism>
    <name type="scientific">Mycobacterium sp. (strain KMS)</name>
    <dbReference type="NCBI Taxonomy" id="189918"/>
    <lineage>
        <taxon>Bacteria</taxon>
        <taxon>Bacillati</taxon>
        <taxon>Actinomycetota</taxon>
        <taxon>Actinomycetes</taxon>
        <taxon>Mycobacteriales</taxon>
        <taxon>Mycobacteriaceae</taxon>
        <taxon>Mycobacterium</taxon>
    </lineage>
</organism>
<protein>
    <recommendedName>
        <fullName evidence="1">Nucleoid-associated protein Mkms_4993</fullName>
    </recommendedName>
</protein>
<dbReference type="EMBL" id="CP000518">
    <property type="protein sequence ID" value="ABL94182.1"/>
    <property type="molecule type" value="Genomic_DNA"/>
</dbReference>
<dbReference type="SMR" id="A1UMX4"/>
<dbReference type="STRING" id="189918.Mkms_4993"/>
<dbReference type="KEGG" id="mkm:Mkms_4993"/>
<dbReference type="HOGENOM" id="CLU_140930_4_0_11"/>
<dbReference type="OrthoDB" id="9809370at2"/>
<dbReference type="GO" id="GO:0043590">
    <property type="term" value="C:bacterial nucleoid"/>
    <property type="evidence" value="ECO:0007669"/>
    <property type="project" value="UniProtKB-UniRule"/>
</dbReference>
<dbReference type="GO" id="GO:0005829">
    <property type="term" value="C:cytosol"/>
    <property type="evidence" value="ECO:0007669"/>
    <property type="project" value="TreeGrafter"/>
</dbReference>
<dbReference type="GO" id="GO:0003677">
    <property type="term" value="F:DNA binding"/>
    <property type="evidence" value="ECO:0007669"/>
    <property type="project" value="UniProtKB-UniRule"/>
</dbReference>
<dbReference type="FunFam" id="3.30.1310.10:FF:000003">
    <property type="entry name" value="Nucleoid-associated protein MRA_3753"/>
    <property type="match status" value="1"/>
</dbReference>
<dbReference type="Gene3D" id="3.30.1310.10">
    <property type="entry name" value="Nucleoid-associated protein YbaB-like domain"/>
    <property type="match status" value="1"/>
</dbReference>
<dbReference type="HAMAP" id="MF_00274">
    <property type="entry name" value="DNA_YbaB_EbfC"/>
    <property type="match status" value="1"/>
</dbReference>
<dbReference type="InterPro" id="IPR036894">
    <property type="entry name" value="YbaB-like_sf"/>
</dbReference>
<dbReference type="InterPro" id="IPR004401">
    <property type="entry name" value="YbaB/EbfC"/>
</dbReference>
<dbReference type="NCBIfam" id="TIGR00103">
    <property type="entry name" value="DNA_YbaB_EbfC"/>
    <property type="match status" value="1"/>
</dbReference>
<dbReference type="PANTHER" id="PTHR33449">
    <property type="entry name" value="NUCLEOID-ASSOCIATED PROTEIN YBAB"/>
    <property type="match status" value="1"/>
</dbReference>
<dbReference type="PANTHER" id="PTHR33449:SF1">
    <property type="entry name" value="NUCLEOID-ASSOCIATED PROTEIN YBAB"/>
    <property type="match status" value="1"/>
</dbReference>
<dbReference type="Pfam" id="PF02575">
    <property type="entry name" value="YbaB_DNA_bd"/>
    <property type="match status" value="1"/>
</dbReference>
<dbReference type="PIRSF" id="PIRSF004555">
    <property type="entry name" value="UCP004555"/>
    <property type="match status" value="1"/>
</dbReference>
<dbReference type="SUPFAM" id="SSF82607">
    <property type="entry name" value="YbaB-like"/>
    <property type="match status" value="1"/>
</dbReference>
<comment type="function">
    <text evidence="1">Binds to DNA and alters its conformation. May be involved in regulation of gene expression, nucleoid organization and DNA protection.</text>
</comment>
<comment type="subunit">
    <text evidence="1">Homodimer.</text>
</comment>
<comment type="subcellular location">
    <subcellularLocation>
        <location evidence="1">Cytoplasm</location>
        <location evidence="1">Nucleoid</location>
    </subcellularLocation>
</comment>
<comment type="similarity">
    <text evidence="1">Belongs to the YbaB/EbfC family.</text>
</comment>
<gene>
    <name type="ordered locus">Mkms_4993</name>
</gene>
<reference key="1">
    <citation type="submission" date="2006-12" db="EMBL/GenBank/DDBJ databases">
        <title>Complete sequence of chromosome of Mycobacterium sp. KMS.</title>
        <authorList>
            <consortium name="US DOE Joint Genome Institute"/>
            <person name="Copeland A."/>
            <person name="Lucas S."/>
            <person name="Lapidus A."/>
            <person name="Barry K."/>
            <person name="Detter J.C."/>
            <person name="Glavina del Rio T."/>
            <person name="Hammon N."/>
            <person name="Israni S."/>
            <person name="Dalin E."/>
            <person name="Tice H."/>
            <person name="Pitluck S."/>
            <person name="Kiss H."/>
            <person name="Brettin T."/>
            <person name="Bruce D."/>
            <person name="Han C."/>
            <person name="Tapia R."/>
            <person name="Gilna P."/>
            <person name="Schmutz J."/>
            <person name="Larimer F."/>
            <person name="Land M."/>
            <person name="Hauser L."/>
            <person name="Kyrpides N."/>
            <person name="Mikhailova N."/>
            <person name="Miller C.D."/>
            <person name="Richardson P."/>
        </authorList>
    </citation>
    <scope>NUCLEOTIDE SEQUENCE [LARGE SCALE GENOMIC DNA]</scope>
    <source>
        <strain>KMS</strain>
    </source>
</reference>
<accession>A1UMX4</accession>